<accession>A9HWW6</accession>
<comment type="catalytic activity">
    <reaction evidence="1">
        <text>tRNA(Leu) + L-leucine + ATP = L-leucyl-tRNA(Leu) + AMP + diphosphate</text>
        <dbReference type="Rhea" id="RHEA:11688"/>
        <dbReference type="Rhea" id="RHEA-COMP:9613"/>
        <dbReference type="Rhea" id="RHEA-COMP:9622"/>
        <dbReference type="ChEBI" id="CHEBI:30616"/>
        <dbReference type="ChEBI" id="CHEBI:33019"/>
        <dbReference type="ChEBI" id="CHEBI:57427"/>
        <dbReference type="ChEBI" id="CHEBI:78442"/>
        <dbReference type="ChEBI" id="CHEBI:78494"/>
        <dbReference type="ChEBI" id="CHEBI:456215"/>
        <dbReference type="EC" id="6.1.1.4"/>
    </reaction>
</comment>
<comment type="subcellular location">
    <subcellularLocation>
        <location evidence="1">Cytoplasm</location>
    </subcellularLocation>
</comment>
<comment type="similarity">
    <text evidence="1">Belongs to the class-I aminoacyl-tRNA synthetase family.</text>
</comment>
<protein>
    <recommendedName>
        <fullName evidence="1">Leucine--tRNA ligase</fullName>
        <ecNumber evidence="1">6.1.1.4</ecNumber>
    </recommendedName>
    <alternativeName>
        <fullName evidence="1">Leucyl-tRNA synthetase</fullName>
        <shortName evidence="1">LeuRS</shortName>
    </alternativeName>
</protein>
<feature type="chain" id="PRO_0000334733" description="Leucine--tRNA ligase">
    <location>
        <begin position="1"/>
        <end position="885"/>
    </location>
</feature>
<feature type="short sequence motif" description="'HIGH' region">
    <location>
        <begin position="48"/>
        <end position="58"/>
    </location>
</feature>
<feature type="short sequence motif" description="'KMSKS' region">
    <location>
        <begin position="639"/>
        <end position="643"/>
    </location>
</feature>
<feature type="binding site" evidence="1">
    <location>
        <position position="642"/>
    </location>
    <ligand>
        <name>ATP</name>
        <dbReference type="ChEBI" id="CHEBI:30616"/>
    </ligand>
</feature>
<reference key="1">
    <citation type="journal article" date="2008" name="BMC Genomics">
        <title>The missing link: Bordetella petrii is endowed with both the metabolic versatility of environmental bacteria and virulence traits of pathogenic Bordetellae.</title>
        <authorList>
            <person name="Gross R."/>
            <person name="Guzman C.A."/>
            <person name="Sebaihia M."/>
            <person name="Martin dos Santos V.A.P."/>
            <person name="Pieper D.H."/>
            <person name="Koebnik R."/>
            <person name="Lechner M."/>
            <person name="Bartels D."/>
            <person name="Buhrmester J."/>
            <person name="Choudhuri J.V."/>
            <person name="Ebensen T."/>
            <person name="Gaigalat L."/>
            <person name="Herrmann S."/>
            <person name="Khachane A.N."/>
            <person name="Larisch C."/>
            <person name="Link S."/>
            <person name="Linke B."/>
            <person name="Meyer F."/>
            <person name="Mormann S."/>
            <person name="Nakunst D."/>
            <person name="Rueckert C."/>
            <person name="Schneiker-Bekel S."/>
            <person name="Schulze K."/>
            <person name="Voerholter F.-J."/>
            <person name="Yevsa T."/>
            <person name="Engle J.T."/>
            <person name="Goldman W.E."/>
            <person name="Puehler A."/>
            <person name="Goebel U.B."/>
            <person name="Goesmann A."/>
            <person name="Bloecker H."/>
            <person name="Kaiser O."/>
            <person name="Martinez-Arias R."/>
        </authorList>
    </citation>
    <scope>NUCLEOTIDE SEQUENCE [LARGE SCALE GENOMIC DNA]</scope>
    <source>
        <strain>ATCC BAA-461 / DSM 12804 / CCUG 43448</strain>
    </source>
</reference>
<organism>
    <name type="scientific">Bordetella petrii (strain ATCC BAA-461 / DSM 12804 / CCUG 43448)</name>
    <dbReference type="NCBI Taxonomy" id="340100"/>
    <lineage>
        <taxon>Bacteria</taxon>
        <taxon>Pseudomonadati</taxon>
        <taxon>Pseudomonadota</taxon>
        <taxon>Betaproteobacteria</taxon>
        <taxon>Burkholderiales</taxon>
        <taxon>Alcaligenaceae</taxon>
        <taxon>Bordetella</taxon>
    </lineage>
</organism>
<gene>
    <name evidence="1" type="primary">leuS</name>
    <name type="ordered locus">Bpet3324</name>
</gene>
<proteinExistence type="inferred from homology"/>
<sequence>MQERYSPTAVEAAAQQDWQARDAYRVTEHARNADGTEKPKFYACSMLPYPSGKLHMGHVRNYTINDMMARQLRMRGYNVLMPMGWDAFGMPAENAAIKSKVPPAKWTYDNIAYMKKQMQAMGLAIDWSREMCACDPEYYKWNQWLFLKMLEKGIAYRKTQVVNWDPVDQTVLANEQVIDGRGWRSGALVEKREIPGYYLRITDYADELLDQVRSGLPGWPERVRAMQENWIGKSEGVRFAFPHTIAGADGQLIQDGRLYVFTTRADTIMGVTFCAVAPEHPLATHAAATNPELASFIEQCKLGGTTEAEIATREKAGMRTGLTVTHPLTGAPVDVWVGNYVLMSYGDGAVMGVPAHDERDFAFAKKYQLPIRQVVAHEGKAYSTDAWQEWYGDKQGGRTVNSGKYDGLPYAEAVDAIAADLAAQGLGEKQTTWRLRDWGISRQRYWGTPIPIIHCADCGPVPVPEQDLPVVLPDDLIPDGSGNPLAKNEAFLSCSCPRCGKPARRETDTMDTFVDSSWYFMRYTSPGNDQAMVDARNDYWMPMDQYIGGIEHAVLHLLYARFWTRVMRDLGLLKFDEPFTKLLCQGMVLNHIYSRKNAQGGIEYFWPEEVENLYDAKGAITGARLKSDGSDVNYGGVGTMSKSKNNGVDPQALIDTLGADTARLFVMFASPPEQTLEWSDSGVEGANRFLRRLWSHCHAHRDAVARGLAAGADWAQAPAPVKDLRREVYGLLKQADYDYQRIQYNTVVSACMKMLNAIDDAKLPEGAHADAARAETLGVLLRVLYPVVPHVTWLLWRELGYTHSLGDLLDAPWPHVDEAALVADEIELMLQVNGKLRGAIRVAAKASKADIEQIAAAQEEVARFLEGRPPKRVIVVPGKLVNVVG</sequence>
<evidence type="ECO:0000255" key="1">
    <source>
        <dbReference type="HAMAP-Rule" id="MF_00049"/>
    </source>
</evidence>
<name>SYL_BORPD</name>
<dbReference type="EC" id="6.1.1.4" evidence="1"/>
<dbReference type="EMBL" id="AM902716">
    <property type="protein sequence ID" value="CAP43666.1"/>
    <property type="molecule type" value="Genomic_DNA"/>
</dbReference>
<dbReference type="SMR" id="A9HWW6"/>
<dbReference type="STRING" id="94624.Bpet3324"/>
<dbReference type="KEGG" id="bpt:Bpet3324"/>
<dbReference type="eggNOG" id="COG0495">
    <property type="taxonomic scope" value="Bacteria"/>
</dbReference>
<dbReference type="Proteomes" id="UP000001225">
    <property type="component" value="Chromosome"/>
</dbReference>
<dbReference type="GO" id="GO:0005829">
    <property type="term" value="C:cytosol"/>
    <property type="evidence" value="ECO:0007669"/>
    <property type="project" value="TreeGrafter"/>
</dbReference>
<dbReference type="GO" id="GO:0002161">
    <property type="term" value="F:aminoacyl-tRNA deacylase activity"/>
    <property type="evidence" value="ECO:0007669"/>
    <property type="project" value="InterPro"/>
</dbReference>
<dbReference type="GO" id="GO:0005524">
    <property type="term" value="F:ATP binding"/>
    <property type="evidence" value="ECO:0007669"/>
    <property type="project" value="UniProtKB-UniRule"/>
</dbReference>
<dbReference type="GO" id="GO:0004823">
    <property type="term" value="F:leucine-tRNA ligase activity"/>
    <property type="evidence" value="ECO:0007669"/>
    <property type="project" value="UniProtKB-UniRule"/>
</dbReference>
<dbReference type="GO" id="GO:0006429">
    <property type="term" value="P:leucyl-tRNA aminoacylation"/>
    <property type="evidence" value="ECO:0007669"/>
    <property type="project" value="UniProtKB-UniRule"/>
</dbReference>
<dbReference type="CDD" id="cd07958">
    <property type="entry name" value="Anticodon_Ia_Leu_BEm"/>
    <property type="match status" value="1"/>
</dbReference>
<dbReference type="CDD" id="cd00812">
    <property type="entry name" value="LeuRS_core"/>
    <property type="match status" value="1"/>
</dbReference>
<dbReference type="FunFam" id="1.10.730.10:FF:000002">
    <property type="entry name" value="Leucine--tRNA ligase"/>
    <property type="match status" value="1"/>
</dbReference>
<dbReference type="FunFam" id="3.10.20.590:FF:000001">
    <property type="entry name" value="Leucine--tRNA ligase"/>
    <property type="match status" value="1"/>
</dbReference>
<dbReference type="FunFam" id="3.40.50.620:FF:000003">
    <property type="entry name" value="Leucine--tRNA ligase"/>
    <property type="match status" value="1"/>
</dbReference>
<dbReference type="FunFam" id="3.40.50.620:FF:000056">
    <property type="entry name" value="Leucine--tRNA ligase"/>
    <property type="match status" value="1"/>
</dbReference>
<dbReference type="FunFam" id="3.90.740.10:FF:000012">
    <property type="entry name" value="Leucine--tRNA ligase"/>
    <property type="match status" value="1"/>
</dbReference>
<dbReference type="Gene3D" id="2.20.28.290">
    <property type="match status" value="1"/>
</dbReference>
<dbReference type="Gene3D" id="3.10.20.590">
    <property type="match status" value="1"/>
</dbReference>
<dbReference type="Gene3D" id="3.40.50.620">
    <property type="entry name" value="HUPs"/>
    <property type="match status" value="2"/>
</dbReference>
<dbReference type="Gene3D" id="1.10.730.10">
    <property type="entry name" value="Isoleucyl-tRNA Synthetase, Domain 1"/>
    <property type="match status" value="2"/>
</dbReference>
<dbReference type="HAMAP" id="MF_00049_B">
    <property type="entry name" value="Leu_tRNA_synth_B"/>
    <property type="match status" value="1"/>
</dbReference>
<dbReference type="InterPro" id="IPR001412">
    <property type="entry name" value="aa-tRNA-synth_I_CS"/>
</dbReference>
<dbReference type="InterPro" id="IPR002300">
    <property type="entry name" value="aa-tRNA-synth_Ia"/>
</dbReference>
<dbReference type="InterPro" id="IPR002302">
    <property type="entry name" value="Leu-tRNA-ligase"/>
</dbReference>
<dbReference type="InterPro" id="IPR025709">
    <property type="entry name" value="Leu_tRNA-synth_edit"/>
</dbReference>
<dbReference type="InterPro" id="IPR013155">
    <property type="entry name" value="M/V/L/I-tRNA-synth_anticd-bd"/>
</dbReference>
<dbReference type="InterPro" id="IPR015413">
    <property type="entry name" value="Methionyl/Leucyl_tRNA_Synth"/>
</dbReference>
<dbReference type="InterPro" id="IPR014729">
    <property type="entry name" value="Rossmann-like_a/b/a_fold"/>
</dbReference>
<dbReference type="InterPro" id="IPR009080">
    <property type="entry name" value="tRNAsynth_Ia_anticodon-bd"/>
</dbReference>
<dbReference type="InterPro" id="IPR009008">
    <property type="entry name" value="Val/Leu/Ile-tRNA-synth_edit"/>
</dbReference>
<dbReference type="NCBIfam" id="TIGR00396">
    <property type="entry name" value="leuS_bact"/>
    <property type="match status" value="1"/>
</dbReference>
<dbReference type="PANTHER" id="PTHR43740:SF2">
    <property type="entry name" value="LEUCINE--TRNA LIGASE, MITOCHONDRIAL"/>
    <property type="match status" value="1"/>
</dbReference>
<dbReference type="PANTHER" id="PTHR43740">
    <property type="entry name" value="LEUCYL-TRNA SYNTHETASE"/>
    <property type="match status" value="1"/>
</dbReference>
<dbReference type="Pfam" id="PF08264">
    <property type="entry name" value="Anticodon_1"/>
    <property type="match status" value="1"/>
</dbReference>
<dbReference type="Pfam" id="PF00133">
    <property type="entry name" value="tRNA-synt_1"/>
    <property type="match status" value="1"/>
</dbReference>
<dbReference type="Pfam" id="PF13603">
    <property type="entry name" value="tRNA-synt_1_2"/>
    <property type="match status" value="1"/>
</dbReference>
<dbReference type="Pfam" id="PF09334">
    <property type="entry name" value="tRNA-synt_1g"/>
    <property type="match status" value="1"/>
</dbReference>
<dbReference type="PRINTS" id="PR00985">
    <property type="entry name" value="TRNASYNTHLEU"/>
</dbReference>
<dbReference type="SUPFAM" id="SSF47323">
    <property type="entry name" value="Anticodon-binding domain of a subclass of class I aminoacyl-tRNA synthetases"/>
    <property type="match status" value="1"/>
</dbReference>
<dbReference type="SUPFAM" id="SSF52374">
    <property type="entry name" value="Nucleotidylyl transferase"/>
    <property type="match status" value="1"/>
</dbReference>
<dbReference type="SUPFAM" id="SSF50677">
    <property type="entry name" value="ValRS/IleRS/LeuRS editing domain"/>
    <property type="match status" value="1"/>
</dbReference>
<dbReference type="PROSITE" id="PS00178">
    <property type="entry name" value="AA_TRNA_LIGASE_I"/>
    <property type="match status" value="1"/>
</dbReference>
<keyword id="KW-0030">Aminoacyl-tRNA synthetase</keyword>
<keyword id="KW-0067">ATP-binding</keyword>
<keyword id="KW-0963">Cytoplasm</keyword>
<keyword id="KW-0436">Ligase</keyword>
<keyword id="KW-0547">Nucleotide-binding</keyword>
<keyword id="KW-0648">Protein biosynthesis</keyword>